<evidence type="ECO:0000256" key="1">
    <source>
        <dbReference type="SAM" id="MobiDB-lite"/>
    </source>
</evidence>
<evidence type="ECO:0000269" key="2">
    <source>
    </source>
</evidence>
<evidence type="ECO:0000269" key="3">
    <source>
    </source>
</evidence>
<evidence type="ECO:0000269" key="4">
    <source>
    </source>
</evidence>
<evidence type="ECO:0000269" key="5">
    <source>
    </source>
</evidence>
<evidence type="ECO:0000269" key="6">
    <source>
    </source>
</evidence>
<evidence type="ECO:0000269" key="7">
    <source>
    </source>
</evidence>
<evidence type="ECO:0000269" key="8">
    <source>
    </source>
</evidence>
<evidence type="ECO:0000269" key="9">
    <source>
    </source>
</evidence>
<evidence type="ECO:0000269" key="10">
    <source>
    </source>
</evidence>
<evidence type="ECO:0000269" key="11">
    <source>
    </source>
</evidence>
<evidence type="ECO:0000303" key="12">
    <source>
    </source>
</evidence>
<evidence type="ECO:0000303" key="13">
    <source>
    </source>
</evidence>
<evidence type="ECO:0000305" key="14"/>
<evidence type="ECO:0007744" key="15">
    <source>
        <dbReference type="PDB" id="5OF1"/>
    </source>
</evidence>
<evidence type="ECO:0007744" key="16">
    <source>
        <dbReference type="PDB" id="5OF2"/>
    </source>
</evidence>
<evidence type="ECO:0007829" key="17">
    <source>
        <dbReference type="PDB" id="5OF1"/>
    </source>
</evidence>
<evidence type="ECO:0007829" key="18">
    <source>
        <dbReference type="PDB" id="5OF2"/>
    </source>
</evidence>
<evidence type="ECO:0007829" key="19">
    <source>
        <dbReference type="PDB" id="8AUR"/>
    </source>
</evidence>
<accession>P54507</accession>
<reference key="1">
    <citation type="journal article" date="1996" name="Microbiology">
        <title>Systematic sequencing of the 283 kb 210 degrees-232 degrees region of the Bacillus subtilis genome containing the skin element and many sporulation genes.</title>
        <authorList>
            <person name="Mizuno M."/>
            <person name="Masuda S."/>
            <person name="Takemaru K."/>
            <person name="Hosono S."/>
            <person name="Sato T."/>
            <person name="Takeuchi M."/>
            <person name="Kobayashi Y."/>
        </authorList>
    </citation>
    <scope>NUCLEOTIDE SEQUENCE [GENOMIC DNA]</scope>
    <source>
        <strain>168 / JH642</strain>
    </source>
</reference>
<reference key="2">
    <citation type="journal article" date="1997" name="Nature">
        <title>The complete genome sequence of the Gram-positive bacterium Bacillus subtilis.</title>
        <authorList>
            <person name="Kunst F."/>
            <person name="Ogasawara N."/>
            <person name="Moszer I."/>
            <person name="Albertini A.M."/>
            <person name="Alloni G."/>
            <person name="Azevedo V."/>
            <person name="Bertero M.G."/>
            <person name="Bessieres P."/>
            <person name="Bolotin A."/>
            <person name="Borchert S."/>
            <person name="Borriss R."/>
            <person name="Boursier L."/>
            <person name="Brans A."/>
            <person name="Braun M."/>
            <person name="Brignell S.C."/>
            <person name="Bron S."/>
            <person name="Brouillet S."/>
            <person name="Bruschi C.V."/>
            <person name="Caldwell B."/>
            <person name="Capuano V."/>
            <person name="Carter N.M."/>
            <person name="Choi S.-K."/>
            <person name="Codani J.-J."/>
            <person name="Connerton I.F."/>
            <person name="Cummings N.J."/>
            <person name="Daniel R.A."/>
            <person name="Denizot F."/>
            <person name="Devine K.M."/>
            <person name="Duesterhoeft A."/>
            <person name="Ehrlich S.D."/>
            <person name="Emmerson P.T."/>
            <person name="Entian K.-D."/>
            <person name="Errington J."/>
            <person name="Fabret C."/>
            <person name="Ferrari E."/>
            <person name="Foulger D."/>
            <person name="Fritz C."/>
            <person name="Fujita M."/>
            <person name="Fujita Y."/>
            <person name="Fuma S."/>
            <person name="Galizzi A."/>
            <person name="Galleron N."/>
            <person name="Ghim S.-Y."/>
            <person name="Glaser P."/>
            <person name="Goffeau A."/>
            <person name="Golightly E.J."/>
            <person name="Grandi G."/>
            <person name="Guiseppi G."/>
            <person name="Guy B.J."/>
            <person name="Haga K."/>
            <person name="Haiech J."/>
            <person name="Harwood C.R."/>
            <person name="Henaut A."/>
            <person name="Hilbert H."/>
            <person name="Holsappel S."/>
            <person name="Hosono S."/>
            <person name="Hullo M.-F."/>
            <person name="Itaya M."/>
            <person name="Jones L.-M."/>
            <person name="Joris B."/>
            <person name="Karamata D."/>
            <person name="Kasahara Y."/>
            <person name="Klaerr-Blanchard M."/>
            <person name="Klein C."/>
            <person name="Kobayashi Y."/>
            <person name="Koetter P."/>
            <person name="Koningstein G."/>
            <person name="Krogh S."/>
            <person name="Kumano M."/>
            <person name="Kurita K."/>
            <person name="Lapidus A."/>
            <person name="Lardinois S."/>
            <person name="Lauber J."/>
            <person name="Lazarevic V."/>
            <person name="Lee S.-M."/>
            <person name="Levine A."/>
            <person name="Liu H."/>
            <person name="Masuda S."/>
            <person name="Mauel C."/>
            <person name="Medigue C."/>
            <person name="Medina N."/>
            <person name="Mellado R.P."/>
            <person name="Mizuno M."/>
            <person name="Moestl D."/>
            <person name="Nakai S."/>
            <person name="Noback M."/>
            <person name="Noone D."/>
            <person name="O'Reilly M."/>
            <person name="Ogawa K."/>
            <person name="Ogiwara A."/>
            <person name="Oudega B."/>
            <person name="Park S.-H."/>
            <person name="Parro V."/>
            <person name="Pohl T.M."/>
            <person name="Portetelle D."/>
            <person name="Porwollik S."/>
            <person name="Prescott A.M."/>
            <person name="Presecan E."/>
            <person name="Pujic P."/>
            <person name="Purnelle B."/>
            <person name="Rapoport G."/>
            <person name="Rey M."/>
            <person name="Reynolds S."/>
            <person name="Rieger M."/>
            <person name="Rivolta C."/>
            <person name="Rocha E."/>
            <person name="Roche B."/>
            <person name="Rose M."/>
            <person name="Sadaie Y."/>
            <person name="Sato T."/>
            <person name="Scanlan E."/>
            <person name="Schleich S."/>
            <person name="Schroeter R."/>
            <person name="Scoffone F."/>
            <person name="Sekiguchi J."/>
            <person name="Sekowska A."/>
            <person name="Seror S.J."/>
            <person name="Serror P."/>
            <person name="Shin B.-S."/>
            <person name="Soldo B."/>
            <person name="Sorokin A."/>
            <person name="Tacconi E."/>
            <person name="Takagi T."/>
            <person name="Takahashi H."/>
            <person name="Takemaru K."/>
            <person name="Takeuchi M."/>
            <person name="Tamakoshi A."/>
            <person name="Tanaka T."/>
            <person name="Terpstra P."/>
            <person name="Tognoni A."/>
            <person name="Tosato V."/>
            <person name="Uchiyama S."/>
            <person name="Vandenbol M."/>
            <person name="Vannier F."/>
            <person name="Vassarotti A."/>
            <person name="Viari A."/>
            <person name="Wambutt R."/>
            <person name="Wedler E."/>
            <person name="Wedler H."/>
            <person name="Weitzenegger T."/>
            <person name="Winters P."/>
            <person name="Wipat A."/>
            <person name="Yamamoto H."/>
            <person name="Yamane K."/>
            <person name="Yasumoto K."/>
            <person name="Yata K."/>
            <person name="Yoshida K."/>
            <person name="Yoshikawa H.-F."/>
            <person name="Zumstein E."/>
            <person name="Yoshikawa H."/>
            <person name="Danchin A."/>
        </authorList>
    </citation>
    <scope>NUCLEOTIDE SEQUENCE [LARGE SCALE GENOMIC DNA]</scope>
    <source>
        <strain>168</strain>
    </source>
</reference>
<reference key="3">
    <citation type="journal article" date="1986" name="J. Bacteriol.">
        <title>Characterization of a cloned Bacillus subtilis gene that inhibits sporulation in multiple copies.</title>
        <authorList>
            <person name="Gaur N.K."/>
            <person name="Dubnau E."/>
            <person name="Smith I."/>
        </authorList>
    </citation>
    <scope>NUCLEOTIDE SEQUENCE [GENOMIC DNA] OF 223-261</scope>
</reference>
<reference key="4">
    <citation type="journal article" date="1999" name="J. Bacteriol.">
        <title>A Bacillus subtilis secreted protein with a role in endospore coat assembly and function.</title>
        <authorList>
            <person name="Serrano M."/>
            <person name="Zilhao R."/>
            <person name="Ricca E."/>
            <person name="Ozin A.J."/>
            <person name="Moran C.P. Jr."/>
            <person name="Henriques A.O."/>
        </authorList>
    </citation>
    <scope>PROTEIN SEQUENCE OF 28-40</scope>
    <scope>FUNCTION</scope>
    <scope>SUBCELLULAR LOCATION</scope>
    <scope>DEVELOPMENTAL STAGE</scope>
    <scope>INDUCTION</scope>
    <scope>DISRUPTION PHENOTYPE</scope>
</reference>
<reference key="5">
    <citation type="journal article" date="2000" name="Microbiology">
        <title>Proteome analysis of Bacillus subtilis extracellular proteins: a two-dimensional protein electrophoretic study.</title>
        <authorList>
            <person name="Hirose I."/>
            <person name="Sano K."/>
            <person name="Shioda I."/>
            <person name="Kumano M."/>
            <person name="Nakamura K."/>
            <person name="Yamane K."/>
        </authorList>
    </citation>
    <scope>PROTEIN SEQUENCE OF 28-39</scope>
    <scope>SUBCELLULAR LOCATION</scope>
    <source>
        <strain>168</strain>
    </source>
</reference>
<reference key="6">
    <citation type="journal article" date="1999" name="J. Bacteriol.">
        <title>Secretion, localization, and antibacterial activity of TasA, a Bacillus subtilis spore-associated protein.</title>
        <authorList>
            <person name="Stoever A.G."/>
            <person name="Driks A."/>
        </authorList>
    </citation>
    <scope>PROTEIN SEQUENCE OF 28-36</scope>
    <scope>FUNCTION</scope>
    <scope>SUBCELLULAR LOCATION</scope>
    <scope>DEVELOPMENTAL STAGE</scope>
    <scope>INDUCTION</scope>
    <source>
        <strain>168</strain>
    </source>
</reference>
<reference key="7">
    <citation type="journal article" date="1999" name="J. Bacteriol.">
        <title>Regulation of synthesis of the Bacillus subtilis transition-phase, spore-associated antibacterial protein TasA.</title>
        <authorList>
            <person name="Stoever A.G."/>
            <person name="Driks A."/>
        </authorList>
    </citation>
    <scope>DEVELOPMENTAL STAGE</scope>
    <scope>INDUCTION</scope>
</reference>
<reference key="8">
    <citation type="journal article" date="2002" name="Structure">
        <title>Structural and biochemical analysis of the Obg GTP binding protein.</title>
        <authorList>
            <person name="Buglino J."/>
            <person name="Shen V."/>
            <person name="Hakimian P."/>
            <person name="Lima C.D."/>
        </authorList>
    </citation>
    <scope>POSSIBLE INTERACTION WITH OBG</scope>
</reference>
<reference key="9">
    <citation type="journal article" date="2006" name="Mol. Microbiol.">
        <title>Targets of the master regulator of biofilm formation in Bacillus subtilis.</title>
        <authorList>
            <person name="Chu F."/>
            <person name="Kearns D.B."/>
            <person name="Branda S.S."/>
            <person name="Kolter R."/>
            <person name="Losick R."/>
        </authorList>
    </citation>
    <scope>REPRESSION BY SINR</scope>
    <scope>DISRUPTION PHENOTYPE</scope>
</reference>
<reference key="10">
    <citation type="journal article" date="2006" name="Mol. Microbiol.">
        <title>A major protein component of the Bacillus subtilis biofilm matrix.</title>
        <authorList>
            <person name="Branda S.S."/>
            <person name="Chu F."/>
            <person name="Kearns D.B."/>
            <person name="Losick R."/>
            <person name="Kolter R."/>
        </authorList>
    </citation>
    <scope>FUNCTION</scope>
    <scope>SUBCELLULAR LOCATION</scope>
    <scope>DISRUPTION PHENOTYPE</scope>
</reference>
<reference key="11">
    <citation type="journal article" date="2010" name="Proc. Natl. Acad. Sci. U.S.A.">
        <title>Amyloid fibers provide structural integrity to Bacillus subtilis biofilms.</title>
        <authorList>
            <person name="Romero D."/>
            <person name="Aguilar C."/>
            <person name="Losick R."/>
            <person name="Kolter R."/>
        </authorList>
    </citation>
    <scope>FUNCTION</scope>
    <scope>SUBUNIT</scope>
</reference>
<reference key="12">
    <citation type="journal article" date="2013" name="Mol. Microbiol.">
        <title>RemA is a DNA-binding protein that activates biofilm matrix gene expression in Bacillus subtilis.</title>
        <authorList>
            <person name="Winkelman J.T."/>
            <person name="Bree A.C."/>
            <person name="Bate A.R."/>
            <person name="Eichenberger P."/>
            <person name="Gourse R.L."/>
            <person name="Kearns D.B."/>
        </authorList>
    </citation>
    <scope>INDUCTION BY REMA</scope>
</reference>
<reference evidence="15 16" key="13">
    <citation type="journal article" date="2018" name="Proc. Natl. Acad. Sci. U.S.A.">
        <title>Structural changes of TasA in biofilm formation of Bacillus subtilis.</title>
        <authorList>
            <person name="Diehl A."/>
            <person name="Roske Y."/>
            <person name="Ball L."/>
            <person name="Chowdhury A."/>
            <person name="Hiller M."/>
            <person name="Moliere N."/>
            <person name="Kramer R."/>
            <person name="Stoppler D."/>
            <person name="Worth C.L."/>
            <person name="Schlegel B."/>
            <person name="Leidert M."/>
            <person name="Cremer N."/>
            <person name="Erdmann N."/>
            <person name="Lopez D."/>
            <person name="Stephanowitz H."/>
            <person name="Krause E."/>
            <person name="van Rossum B.J."/>
            <person name="Schmieder P."/>
            <person name="Heinemann U."/>
            <person name="Turgay K."/>
            <person name="Akbey U."/>
            <person name="Oschkinat H."/>
        </authorList>
    </citation>
    <scope>X-RAY CRYSTALLOGRAPHY (1.56 ANGSTROMS) OF 30-239</scope>
    <scope>SUBUNIT</scope>
</reference>
<organism>
    <name type="scientific">Bacillus subtilis (strain 168)</name>
    <dbReference type="NCBI Taxonomy" id="224308"/>
    <lineage>
        <taxon>Bacteria</taxon>
        <taxon>Bacillati</taxon>
        <taxon>Bacillota</taxon>
        <taxon>Bacilli</taxon>
        <taxon>Bacillales</taxon>
        <taxon>Bacillaceae</taxon>
        <taxon>Bacillus</taxon>
    </lineage>
</organism>
<protein>
    <recommendedName>
        <fullName evidence="14">Major biofilm matrix component</fullName>
    </recommendedName>
    <alternativeName>
        <fullName evidence="13">Spore coat-associated protein N</fullName>
    </alternativeName>
    <alternativeName>
        <fullName evidence="12">Translocation-dependent antimicrobial spore component</fullName>
    </alternativeName>
</protein>
<name>TASA_BACSU</name>
<gene>
    <name evidence="12" type="primary">tasA</name>
    <name evidence="13" type="synonym">cotN</name>
    <name type="synonym">yqhF</name>
    <name type="ordered locus">BSU24620</name>
</gene>
<feature type="signal peptide" evidence="2 3 5">
    <location>
        <begin position="1"/>
        <end position="27"/>
    </location>
</feature>
<feature type="chain" id="PRO_0000079268" description="Major biofilm matrix component">
    <location>
        <begin position="28"/>
        <end position="261"/>
    </location>
</feature>
<feature type="region of interest" description="Disordered" evidence="1">
    <location>
        <begin position="241"/>
        <end position="261"/>
    </location>
</feature>
<feature type="strand" evidence="19">
    <location>
        <begin position="30"/>
        <end position="41"/>
    </location>
</feature>
<feature type="strand" evidence="17">
    <location>
        <begin position="42"/>
        <end position="45"/>
    </location>
</feature>
<feature type="strand" evidence="17">
    <location>
        <begin position="52"/>
        <end position="57"/>
    </location>
</feature>
<feature type="strand" evidence="17">
    <location>
        <begin position="65"/>
        <end position="73"/>
    </location>
</feature>
<feature type="strand" evidence="19">
    <location>
        <begin position="76"/>
        <end position="78"/>
    </location>
</feature>
<feature type="strand" evidence="17">
    <location>
        <begin position="82"/>
        <end position="93"/>
    </location>
</feature>
<feature type="helix" evidence="17">
    <location>
        <begin position="102"/>
        <end position="106"/>
    </location>
</feature>
<feature type="strand" evidence="17">
    <location>
        <begin position="109"/>
        <end position="115"/>
    </location>
</feature>
<feature type="strand" evidence="19">
    <location>
        <begin position="122"/>
        <end position="125"/>
    </location>
</feature>
<feature type="strand" evidence="17">
    <location>
        <begin position="127"/>
        <end position="134"/>
    </location>
</feature>
<feature type="helix" evidence="17">
    <location>
        <begin position="135"/>
        <end position="144"/>
    </location>
</feature>
<feature type="helix" evidence="17">
    <location>
        <begin position="147"/>
        <end position="154"/>
    </location>
</feature>
<feature type="helix" evidence="17">
    <location>
        <begin position="159"/>
        <end position="161"/>
    </location>
</feature>
<feature type="helix" evidence="17">
    <location>
        <begin position="178"/>
        <end position="180"/>
    </location>
</feature>
<feature type="strand" evidence="17">
    <location>
        <begin position="181"/>
        <end position="183"/>
    </location>
</feature>
<feature type="turn" evidence="19">
    <location>
        <begin position="186"/>
        <end position="189"/>
    </location>
</feature>
<feature type="strand" evidence="17">
    <location>
        <begin position="194"/>
        <end position="200"/>
    </location>
</feature>
<feature type="strand" evidence="19">
    <location>
        <begin position="208"/>
        <end position="210"/>
    </location>
</feature>
<feature type="helix" evidence="17">
    <location>
        <begin position="213"/>
        <end position="217"/>
    </location>
</feature>
<feature type="strand" evidence="17">
    <location>
        <begin position="221"/>
        <end position="231"/>
    </location>
</feature>
<feature type="strand" evidence="18">
    <location>
        <begin position="235"/>
        <end position="237"/>
    </location>
</feature>
<feature type="turn" evidence="19">
    <location>
        <begin position="240"/>
        <end position="242"/>
    </location>
</feature>
<feature type="strand" evidence="19">
    <location>
        <begin position="245"/>
        <end position="247"/>
    </location>
</feature>
<feature type="helix" evidence="19">
    <location>
        <begin position="251"/>
        <end position="253"/>
    </location>
</feature>
<proteinExistence type="evidence at protein level"/>
<comment type="function">
    <text evidence="2 3 8 9">TasA is the major protein component of the biofilm extracellular matrix (PubMed:16430696, PubMed:20080671). It forms amyloid fibers that bind cells together in the biofilm (PubMed:20080671). Exhibits an antibacterial activity against a variety of Gram-positive and Gram-negative bacteria (PubMed:10049401). In laboratory strains, is also involved in proper spore coat assembly (PubMed:10368135).</text>
</comment>
<comment type="subunit">
    <text evidence="6 9 11">Forms fibers (PubMed:20080671, PubMed:29531041). Fibers have variable length and are 10-15 nm width (PubMed:20080671). Interacts with obg (AC P20964) in pull-down experiments (PubMed:12429099).</text>
</comment>
<comment type="interaction">
    <interactant intactId="EBI-15827660">
        <id>P54507</id>
    </interactant>
    <interactant intactId="EBI-15827660">
        <id>P54507</id>
        <label>tasA</label>
    </interactant>
    <organismsDiffer>false</organismsDiffer>
    <experiments>6</experiments>
</comment>
<comment type="subcellular location">
    <subcellularLocation>
        <location evidence="2 3 5 8">Secreted</location>
    </subcellularLocation>
    <subcellularLocation>
        <location evidence="2 3">Forespore intermembrane space</location>
    </subcellularLocation>
    <text evidence="2 8">In undomesticated strains, is secreted and primarily associated with the extracellular matrix (PubMed:16430696). In laboratory strains, is secreted into the medium early in sporulation and is also incorporated into the spore. Processing, export and incorporation into spores depend on SipW (PubMed:10049401).</text>
</comment>
<comment type="developmental stage">
    <text evidence="2 3 4">In laboratory strains, is a transition-phase protein that is expressed early in spore formation, as cells enter stationary phase (PubMed:10049401, PubMed:10368135, PubMed:10464223). Expression can occur as cells enter stationary phase even under sporulation-repressing conditions (PubMed:10464223).</text>
</comment>
<comment type="induction">
    <text evidence="2 3 4 7 10">Part of the tapA-sipW-tasA operon (PubMed:10464223). Expression is directly repressed by the DNA-binding protein master regulator of biofilm formation SinR and activated by the extracellular matrix regulatory protein RemA (PubMed:16430695, PubMed:23646920). Also positively regulated by the sporulation transcription factors sigma H and Spo0A and repressed by the transition phase regulatory protein AbrB, probably indirectly (PubMed:10049401, PubMed:10368135, PubMed:10464223).</text>
</comment>
<comment type="disruption phenotype">
    <text evidence="3 7 8">Mutation impairs colony surface architecture (PubMed:16430695). Mutant forms pellicles with less extracellular material (PubMed:16430696). Deletion of the gene results in the production of asymmetric spores that accumulate misassembled material in one pole and have a greatly expanded undercoat and an altered outer coat structure (PubMed:10368135).</text>
</comment>
<comment type="similarity">
    <text evidence="14">Belongs to the peptidase M73 family.</text>
</comment>
<keyword id="KW-0002">3D-structure</keyword>
<keyword id="KW-0903">Direct protein sequencing</keyword>
<keyword id="KW-1185">Reference proteome</keyword>
<keyword id="KW-0964">Secreted</keyword>
<keyword id="KW-0732">Signal</keyword>
<keyword id="KW-0749">Sporulation</keyword>
<sequence>MGMKKKLSLGVASAALGLALVGGGTWAAFNDIKSKDATFASGTLDLSAKENSASVNLSNLKPGDKLTKDFQFENNGSLAIKEVLMALNYGDFKANGGSNTSPEDFLSQFEVTLLTVGKEGGNGYPKNIILDDANLKDLYLMSAKNDAAAAEKIKKQIDPKFLNASGKVNVATIDGKTAPEYDGVPKTPTDFDQVQMEIQFKDDKTKDEKGLMVQNKYQGNSIKLQFSFEATQWNGLTIKKDHTDKDGYVKENEKAHSEDKN</sequence>
<dbReference type="EMBL" id="D84432">
    <property type="protein sequence ID" value="BAA12541.1"/>
    <property type="molecule type" value="Genomic_DNA"/>
</dbReference>
<dbReference type="EMBL" id="AL009126">
    <property type="protein sequence ID" value="CAB14393.1"/>
    <property type="molecule type" value="Genomic_DNA"/>
</dbReference>
<dbReference type="EMBL" id="M14112">
    <property type="status" value="NOT_ANNOTATED_CDS"/>
    <property type="molecule type" value="Genomic_DNA"/>
</dbReference>
<dbReference type="PIR" id="D69606">
    <property type="entry name" value="D69606"/>
</dbReference>
<dbReference type="RefSeq" id="NP_390342.1">
    <property type="nucleotide sequence ID" value="NC_000964.3"/>
</dbReference>
<dbReference type="RefSeq" id="WP_004398632.1">
    <property type="nucleotide sequence ID" value="NZ_OZ025638.1"/>
</dbReference>
<dbReference type="PDB" id="5OF1">
    <property type="method" value="X-ray"/>
    <property type="resolution" value="1.56 A"/>
    <property type="chains" value="A/B=30-239"/>
</dbReference>
<dbReference type="PDB" id="5OF2">
    <property type="method" value="X-ray"/>
    <property type="resolution" value="1.86 A"/>
    <property type="chains" value="A=30-239"/>
</dbReference>
<dbReference type="PDB" id="8AUR">
    <property type="method" value="EM"/>
    <property type="resolution" value="3.47 A"/>
    <property type="chains" value="A/B/C=28-261"/>
</dbReference>
<dbReference type="PDBsum" id="5OF1"/>
<dbReference type="PDBsum" id="5OF2"/>
<dbReference type="PDBsum" id="8AUR"/>
<dbReference type="BMRB" id="P54507"/>
<dbReference type="EMDB" id="EMD-15673"/>
<dbReference type="SMR" id="P54507"/>
<dbReference type="DIP" id="DIP-58529N"/>
<dbReference type="FunCoup" id="P54507">
    <property type="interactions" value="6"/>
</dbReference>
<dbReference type="STRING" id="224308.BSU24620"/>
<dbReference type="MEROPS" id="M73.A01"/>
<dbReference type="PaxDb" id="224308-BSU24620"/>
<dbReference type="DNASU" id="938545"/>
<dbReference type="EnsemblBacteria" id="CAB14393">
    <property type="protein sequence ID" value="CAB14393"/>
    <property type="gene ID" value="BSU_24620"/>
</dbReference>
<dbReference type="GeneID" id="938545"/>
<dbReference type="KEGG" id="bsu:BSU24620"/>
<dbReference type="PATRIC" id="fig|224308.179.peg.2680"/>
<dbReference type="eggNOG" id="ENOG502ZBTW">
    <property type="taxonomic scope" value="Bacteria"/>
</dbReference>
<dbReference type="InParanoid" id="P54507"/>
<dbReference type="OrthoDB" id="2660939at2"/>
<dbReference type="PhylomeDB" id="P54507"/>
<dbReference type="BioCyc" id="BSUB:BSU24620-MONOMER"/>
<dbReference type="Proteomes" id="UP000001570">
    <property type="component" value="Chromosome"/>
</dbReference>
<dbReference type="GO" id="GO:0005576">
    <property type="term" value="C:extracellular region"/>
    <property type="evidence" value="ECO:0007669"/>
    <property type="project" value="UniProtKB-SubCell"/>
</dbReference>
<dbReference type="GO" id="GO:0042802">
    <property type="term" value="F:identical protein binding"/>
    <property type="evidence" value="ECO:0000353"/>
    <property type="project" value="IntAct"/>
</dbReference>
<dbReference type="GO" id="GO:0030435">
    <property type="term" value="P:sporulation resulting in formation of a cellular spore"/>
    <property type="evidence" value="ECO:0007669"/>
    <property type="project" value="UniProtKB-KW"/>
</dbReference>
<dbReference type="InterPro" id="IPR022121">
    <property type="entry name" value="Peptidase_M73_camelysin"/>
</dbReference>
<dbReference type="InterPro" id="IPR023833">
    <property type="entry name" value="Signal_pept_SipW-depend-type"/>
</dbReference>
<dbReference type="NCBIfam" id="NF046066">
    <property type="entry name" value="BioflmMtrxTasA"/>
    <property type="match status" value="1"/>
</dbReference>
<dbReference type="NCBIfam" id="TIGR04088">
    <property type="entry name" value="cognate_SipW"/>
    <property type="match status" value="1"/>
</dbReference>
<dbReference type="Pfam" id="PF12389">
    <property type="entry name" value="Peptidase_M73"/>
    <property type="match status" value="1"/>
</dbReference>